<keyword id="KW-0227">DNA damage</keyword>
<keyword id="KW-0234">DNA repair</keyword>
<keyword id="KW-0235">DNA replication</keyword>
<keyword id="KW-0436">Ligase</keyword>
<keyword id="KW-0460">Magnesium</keyword>
<keyword id="KW-0464">Manganese</keyword>
<keyword id="KW-0479">Metal-binding</keyword>
<keyword id="KW-0520">NAD</keyword>
<keyword id="KW-0862">Zinc</keyword>
<protein>
    <recommendedName>
        <fullName evidence="1">DNA ligase</fullName>
        <ecNumber evidence="1">6.5.1.2</ecNumber>
    </recommendedName>
    <alternativeName>
        <fullName evidence="1">Polydeoxyribonucleotide synthase [NAD(+)]</fullName>
    </alternativeName>
</protein>
<accession>Q1BHI7</accession>
<proteinExistence type="inferred from homology"/>
<sequence>MARTQAEPPASQPDARAAWLRDQLERANYAYYVLDQPDLPDAEYDRLFRELQQLETDHPELVTPDSPTQRVGGEAAGGFTPVVHDAPMLSLNNGFADEDIVAFDKRVADALAKTTDLAGSVTDPVEYACELKFDGLAISLRYEQGVFVQAATRGDGTTGEDVTENVRTIRSIPLKLKGKHVPAVLDVRGEVLMFKRDFARLNERQRAAEQREFANPRNAAAGSLRQLDSKITAQRPLSFFAYGIGVLDGMPMPDTHSALLDWYESLGLPVNRERAVVHGAEGLLDFFRKVGEKRESLPYDIDGVVYKVNRRDEQERLGFVSRAPRFALAHKFPAQEALTKLVAIDVQVGRTGAITPVARLEPVFVGGATVTNATLHNEDEVRRKDIRIGDTVIVRRAGDVIPEVVGALLDRRPADAAEFVMPTECPVCGSKIERLPDEAIARCTGGLFCPAQRKQALWHFAQRRALDIDGLGEKIIDQLVELNLVRTPADLFNLGFATLAELDRFAEKSAQNLIDSLEKAKHTTLARFIYGLGIRHVGESTAKDLAKHFGSLTPIMDASIEELLEVNDVGPIVAESLHQFFAEEHNRTVIEQLRAPGKVTWPEGPPAPKAPQGVLAGKTVVLTGTLPNLTRDAAKEMLEAAGAKVAGSVSKKTDYVVAGAEAGSKLAKAEELGIPVLDEDGLHQLLEGNTP</sequence>
<gene>
    <name evidence="1" type="primary">ligA</name>
    <name type="ordered locus">Bcen_6053</name>
</gene>
<feature type="chain" id="PRO_0000313158" description="DNA ligase">
    <location>
        <begin position="1"/>
        <end position="691"/>
    </location>
</feature>
<feature type="domain" description="BRCT" evidence="1">
    <location>
        <begin position="610"/>
        <end position="691"/>
    </location>
</feature>
<feature type="active site" description="N6-AMP-lysine intermediate" evidence="1">
    <location>
        <position position="132"/>
    </location>
</feature>
<feature type="binding site" evidence="1">
    <location>
        <begin position="41"/>
        <end position="45"/>
    </location>
    <ligand>
        <name>NAD(+)</name>
        <dbReference type="ChEBI" id="CHEBI:57540"/>
    </ligand>
</feature>
<feature type="binding site" evidence="1">
    <location>
        <begin position="90"/>
        <end position="91"/>
    </location>
    <ligand>
        <name>NAD(+)</name>
        <dbReference type="ChEBI" id="CHEBI:57540"/>
    </ligand>
</feature>
<feature type="binding site" evidence="1">
    <location>
        <position position="130"/>
    </location>
    <ligand>
        <name>NAD(+)</name>
        <dbReference type="ChEBI" id="CHEBI:57540"/>
    </ligand>
</feature>
<feature type="binding site" evidence="1">
    <location>
        <position position="153"/>
    </location>
    <ligand>
        <name>NAD(+)</name>
        <dbReference type="ChEBI" id="CHEBI:57540"/>
    </ligand>
</feature>
<feature type="binding site" evidence="1">
    <location>
        <position position="190"/>
    </location>
    <ligand>
        <name>NAD(+)</name>
        <dbReference type="ChEBI" id="CHEBI:57540"/>
    </ligand>
</feature>
<feature type="binding site" evidence="1">
    <location>
        <position position="307"/>
    </location>
    <ligand>
        <name>NAD(+)</name>
        <dbReference type="ChEBI" id="CHEBI:57540"/>
    </ligand>
</feature>
<feature type="binding site" evidence="1">
    <location>
        <position position="331"/>
    </location>
    <ligand>
        <name>NAD(+)</name>
        <dbReference type="ChEBI" id="CHEBI:57540"/>
    </ligand>
</feature>
<feature type="binding site" evidence="1">
    <location>
        <position position="425"/>
    </location>
    <ligand>
        <name>Zn(2+)</name>
        <dbReference type="ChEBI" id="CHEBI:29105"/>
    </ligand>
</feature>
<feature type="binding site" evidence="1">
    <location>
        <position position="428"/>
    </location>
    <ligand>
        <name>Zn(2+)</name>
        <dbReference type="ChEBI" id="CHEBI:29105"/>
    </ligand>
</feature>
<feature type="binding site" evidence="1">
    <location>
        <position position="443"/>
    </location>
    <ligand>
        <name>Zn(2+)</name>
        <dbReference type="ChEBI" id="CHEBI:29105"/>
    </ligand>
</feature>
<feature type="binding site" evidence="1">
    <location>
        <position position="449"/>
    </location>
    <ligand>
        <name>Zn(2+)</name>
        <dbReference type="ChEBI" id="CHEBI:29105"/>
    </ligand>
</feature>
<name>DNLJ_BURO1</name>
<comment type="function">
    <text evidence="1">DNA ligase that catalyzes the formation of phosphodiester linkages between 5'-phosphoryl and 3'-hydroxyl groups in double-stranded DNA using NAD as a coenzyme and as the energy source for the reaction. It is essential for DNA replication and repair of damaged DNA.</text>
</comment>
<comment type="catalytic activity">
    <reaction evidence="1">
        <text>NAD(+) + (deoxyribonucleotide)n-3'-hydroxyl + 5'-phospho-(deoxyribonucleotide)m = (deoxyribonucleotide)n+m + AMP + beta-nicotinamide D-nucleotide.</text>
        <dbReference type="EC" id="6.5.1.2"/>
    </reaction>
</comment>
<comment type="cofactor">
    <cofactor evidence="1">
        <name>Mg(2+)</name>
        <dbReference type="ChEBI" id="CHEBI:18420"/>
    </cofactor>
    <cofactor evidence="1">
        <name>Mn(2+)</name>
        <dbReference type="ChEBI" id="CHEBI:29035"/>
    </cofactor>
</comment>
<comment type="similarity">
    <text evidence="1">Belongs to the NAD-dependent DNA ligase family. LigA subfamily.</text>
</comment>
<comment type="sequence caution" evidence="2">
    <conflict type="erroneous initiation">
        <sequence resource="EMBL-CDS" id="ABF80918"/>
    </conflict>
</comment>
<dbReference type="EC" id="6.5.1.2" evidence="1"/>
<dbReference type="EMBL" id="CP000380">
    <property type="protein sequence ID" value="ABF80918.1"/>
    <property type="status" value="ALT_INIT"/>
    <property type="molecule type" value="Genomic_DNA"/>
</dbReference>
<dbReference type="SMR" id="Q1BHI7"/>
<dbReference type="HOGENOM" id="CLU_007764_2_1_4"/>
<dbReference type="GO" id="GO:0005829">
    <property type="term" value="C:cytosol"/>
    <property type="evidence" value="ECO:0007669"/>
    <property type="project" value="TreeGrafter"/>
</dbReference>
<dbReference type="GO" id="GO:0003677">
    <property type="term" value="F:DNA binding"/>
    <property type="evidence" value="ECO:0007669"/>
    <property type="project" value="InterPro"/>
</dbReference>
<dbReference type="GO" id="GO:0003911">
    <property type="term" value="F:DNA ligase (NAD+) activity"/>
    <property type="evidence" value="ECO:0007669"/>
    <property type="project" value="UniProtKB-UniRule"/>
</dbReference>
<dbReference type="GO" id="GO:0046872">
    <property type="term" value="F:metal ion binding"/>
    <property type="evidence" value="ECO:0007669"/>
    <property type="project" value="UniProtKB-KW"/>
</dbReference>
<dbReference type="GO" id="GO:0006281">
    <property type="term" value="P:DNA repair"/>
    <property type="evidence" value="ECO:0007669"/>
    <property type="project" value="UniProtKB-KW"/>
</dbReference>
<dbReference type="GO" id="GO:0006260">
    <property type="term" value="P:DNA replication"/>
    <property type="evidence" value="ECO:0007669"/>
    <property type="project" value="UniProtKB-KW"/>
</dbReference>
<dbReference type="CDD" id="cd17748">
    <property type="entry name" value="BRCT_DNA_ligase_like"/>
    <property type="match status" value="1"/>
</dbReference>
<dbReference type="CDD" id="cd00114">
    <property type="entry name" value="LIGANc"/>
    <property type="match status" value="1"/>
</dbReference>
<dbReference type="FunFam" id="1.10.150.20:FF:000006">
    <property type="entry name" value="DNA ligase"/>
    <property type="match status" value="1"/>
</dbReference>
<dbReference type="FunFam" id="1.10.150.20:FF:000007">
    <property type="entry name" value="DNA ligase"/>
    <property type="match status" value="1"/>
</dbReference>
<dbReference type="FunFam" id="1.10.287.610:FF:000002">
    <property type="entry name" value="DNA ligase"/>
    <property type="match status" value="1"/>
</dbReference>
<dbReference type="FunFam" id="2.40.50.140:FF:000012">
    <property type="entry name" value="DNA ligase"/>
    <property type="match status" value="1"/>
</dbReference>
<dbReference type="FunFam" id="3.30.470.30:FF:000001">
    <property type="entry name" value="DNA ligase"/>
    <property type="match status" value="1"/>
</dbReference>
<dbReference type="FunFam" id="3.40.50.10190:FF:000054">
    <property type="entry name" value="DNA ligase"/>
    <property type="match status" value="1"/>
</dbReference>
<dbReference type="Gene3D" id="6.20.10.30">
    <property type="match status" value="1"/>
</dbReference>
<dbReference type="Gene3D" id="1.10.150.20">
    <property type="entry name" value="5' to 3' exonuclease, C-terminal subdomain"/>
    <property type="match status" value="2"/>
</dbReference>
<dbReference type="Gene3D" id="3.40.50.10190">
    <property type="entry name" value="BRCT domain"/>
    <property type="match status" value="1"/>
</dbReference>
<dbReference type="Gene3D" id="3.30.470.30">
    <property type="entry name" value="DNA ligase/mRNA capping enzyme"/>
    <property type="match status" value="1"/>
</dbReference>
<dbReference type="Gene3D" id="1.10.287.610">
    <property type="entry name" value="Helix hairpin bin"/>
    <property type="match status" value="1"/>
</dbReference>
<dbReference type="Gene3D" id="2.40.50.140">
    <property type="entry name" value="Nucleic acid-binding proteins"/>
    <property type="match status" value="1"/>
</dbReference>
<dbReference type="HAMAP" id="MF_01588">
    <property type="entry name" value="DNA_ligase_A"/>
    <property type="match status" value="1"/>
</dbReference>
<dbReference type="InterPro" id="IPR001357">
    <property type="entry name" value="BRCT_dom"/>
</dbReference>
<dbReference type="InterPro" id="IPR036420">
    <property type="entry name" value="BRCT_dom_sf"/>
</dbReference>
<dbReference type="InterPro" id="IPR041663">
    <property type="entry name" value="DisA/LigA_HHH"/>
</dbReference>
<dbReference type="InterPro" id="IPR001679">
    <property type="entry name" value="DNA_ligase"/>
</dbReference>
<dbReference type="InterPro" id="IPR018239">
    <property type="entry name" value="DNA_ligase_AS"/>
</dbReference>
<dbReference type="InterPro" id="IPR033136">
    <property type="entry name" value="DNA_ligase_CS"/>
</dbReference>
<dbReference type="InterPro" id="IPR013839">
    <property type="entry name" value="DNAligase_adenylation"/>
</dbReference>
<dbReference type="InterPro" id="IPR013840">
    <property type="entry name" value="DNAligase_N"/>
</dbReference>
<dbReference type="InterPro" id="IPR003583">
    <property type="entry name" value="Hlx-hairpin-Hlx_DNA-bd_motif"/>
</dbReference>
<dbReference type="InterPro" id="IPR012340">
    <property type="entry name" value="NA-bd_OB-fold"/>
</dbReference>
<dbReference type="InterPro" id="IPR004150">
    <property type="entry name" value="NAD_DNA_ligase_OB"/>
</dbReference>
<dbReference type="InterPro" id="IPR010994">
    <property type="entry name" value="RuvA_2-like"/>
</dbReference>
<dbReference type="InterPro" id="IPR004149">
    <property type="entry name" value="Znf_DNAligase_C4"/>
</dbReference>
<dbReference type="NCBIfam" id="TIGR00575">
    <property type="entry name" value="dnlj"/>
    <property type="match status" value="1"/>
</dbReference>
<dbReference type="NCBIfam" id="NF005932">
    <property type="entry name" value="PRK07956.1"/>
    <property type="match status" value="1"/>
</dbReference>
<dbReference type="PANTHER" id="PTHR23389">
    <property type="entry name" value="CHROMOSOME TRANSMISSION FIDELITY FACTOR 18"/>
    <property type="match status" value="1"/>
</dbReference>
<dbReference type="PANTHER" id="PTHR23389:SF9">
    <property type="entry name" value="DNA LIGASE"/>
    <property type="match status" value="1"/>
</dbReference>
<dbReference type="Pfam" id="PF00533">
    <property type="entry name" value="BRCT"/>
    <property type="match status" value="1"/>
</dbReference>
<dbReference type="Pfam" id="PF01653">
    <property type="entry name" value="DNA_ligase_aden"/>
    <property type="match status" value="1"/>
</dbReference>
<dbReference type="Pfam" id="PF03120">
    <property type="entry name" value="DNA_ligase_OB"/>
    <property type="match status" value="1"/>
</dbReference>
<dbReference type="Pfam" id="PF03119">
    <property type="entry name" value="DNA_ligase_ZBD"/>
    <property type="match status" value="1"/>
</dbReference>
<dbReference type="Pfam" id="PF12826">
    <property type="entry name" value="HHH_2"/>
    <property type="match status" value="1"/>
</dbReference>
<dbReference type="Pfam" id="PF14520">
    <property type="entry name" value="HHH_5"/>
    <property type="match status" value="1"/>
</dbReference>
<dbReference type="Pfam" id="PF22745">
    <property type="entry name" value="Nlig-Ia"/>
    <property type="match status" value="1"/>
</dbReference>
<dbReference type="PIRSF" id="PIRSF001604">
    <property type="entry name" value="LigA"/>
    <property type="match status" value="1"/>
</dbReference>
<dbReference type="SMART" id="SM00292">
    <property type="entry name" value="BRCT"/>
    <property type="match status" value="1"/>
</dbReference>
<dbReference type="SMART" id="SM00278">
    <property type="entry name" value="HhH1"/>
    <property type="match status" value="3"/>
</dbReference>
<dbReference type="SMART" id="SM00532">
    <property type="entry name" value="LIGANc"/>
    <property type="match status" value="1"/>
</dbReference>
<dbReference type="SUPFAM" id="SSF52113">
    <property type="entry name" value="BRCT domain"/>
    <property type="match status" value="1"/>
</dbReference>
<dbReference type="SUPFAM" id="SSF56091">
    <property type="entry name" value="DNA ligase/mRNA capping enzyme, catalytic domain"/>
    <property type="match status" value="1"/>
</dbReference>
<dbReference type="SUPFAM" id="SSF50249">
    <property type="entry name" value="Nucleic acid-binding proteins"/>
    <property type="match status" value="1"/>
</dbReference>
<dbReference type="SUPFAM" id="SSF47781">
    <property type="entry name" value="RuvA domain 2-like"/>
    <property type="match status" value="1"/>
</dbReference>
<dbReference type="PROSITE" id="PS50172">
    <property type="entry name" value="BRCT"/>
    <property type="match status" value="1"/>
</dbReference>
<dbReference type="PROSITE" id="PS01055">
    <property type="entry name" value="DNA_LIGASE_N1"/>
    <property type="match status" value="1"/>
</dbReference>
<dbReference type="PROSITE" id="PS01056">
    <property type="entry name" value="DNA_LIGASE_N2"/>
    <property type="match status" value="1"/>
</dbReference>
<organism>
    <name type="scientific">Burkholderia orbicola (strain AU 1054)</name>
    <dbReference type="NCBI Taxonomy" id="331271"/>
    <lineage>
        <taxon>Bacteria</taxon>
        <taxon>Pseudomonadati</taxon>
        <taxon>Pseudomonadota</taxon>
        <taxon>Betaproteobacteria</taxon>
        <taxon>Burkholderiales</taxon>
        <taxon>Burkholderiaceae</taxon>
        <taxon>Burkholderia</taxon>
        <taxon>Burkholderia cepacia complex</taxon>
        <taxon>Burkholderia orbicola</taxon>
    </lineage>
</organism>
<reference key="1">
    <citation type="submission" date="2006-05" db="EMBL/GenBank/DDBJ databases">
        <title>Complete sequence of chromosome 3 of Burkholderia cenocepacia AU 1054.</title>
        <authorList>
            <consortium name="US DOE Joint Genome Institute"/>
            <person name="Copeland A."/>
            <person name="Lucas S."/>
            <person name="Lapidus A."/>
            <person name="Barry K."/>
            <person name="Detter J.C."/>
            <person name="Glavina del Rio T."/>
            <person name="Hammon N."/>
            <person name="Israni S."/>
            <person name="Dalin E."/>
            <person name="Tice H."/>
            <person name="Pitluck S."/>
            <person name="Chain P."/>
            <person name="Malfatti S."/>
            <person name="Shin M."/>
            <person name="Vergez L."/>
            <person name="Schmutz J."/>
            <person name="Larimer F."/>
            <person name="Land M."/>
            <person name="Hauser L."/>
            <person name="Kyrpides N."/>
            <person name="Lykidis A."/>
            <person name="LiPuma J.J."/>
            <person name="Konstantinidis K."/>
            <person name="Tiedje J.M."/>
            <person name="Richardson P."/>
        </authorList>
    </citation>
    <scope>NUCLEOTIDE SEQUENCE [LARGE SCALE GENOMIC DNA]</scope>
    <source>
        <strain>AU 1054</strain>
    </source>
</reference>
<evidence type="ECO:0000255" key="1">
    <source>
        <dbReference type="HAMAP-Rule" id="MF_01588"/>
    </source>
</evidence>
<evidence type="ECO:0000305" key="2"/>